<reference key="1">
    <citation type="journal article" date="2004" name="Physiol. Genomics">
        <title>Trappin ovine molecule (TOM), the ovine ortholog of elafin, is an acute phase reactant in the lung.</title>
        <authorList>
            <person name="Brown T.I."/>
            <person name="Mistry R."/>
            <person name="Collie D.D."/>
            <person name="Tate S."/>
            <person name="Sallenave J.-M."/>
        </authorList>
    </citation>
    <scope>NUCLEOTIDE SEQUENCE [GENOMIC DNA]</scope>
    <scope>SUBCELLULAR LOCATION</scope>
    <scope>TISSUE SPECIFICITY</scope>
    <scope>INDUCTION BY BACTERIAL LIPOPOLYSACCHARIDE</scope>
</reference>
<name>SLPI_SHEEP</name>
<feature type="signal peptide" evidence="3">
    <location>
        <begin position="1"/>
        <end position="24"/>
    </location>
</feature>
<feature type="chain" id="PRO_0000279743" description="Antileukoproteinase">
    <location>
        <begin position="25"/>
        <end position="132"/>
    </location>
</feature>
<feature type="domain" description="WAP 1" evidence="4">
    <location>
        <begin position="28"/>
        <end position="76"/>
    </location>
</feature>
<feature type="domain" description="WAP 2" evidence="4">
    <location>
        <begin position="82"/>
        <end position="130"/>
    </location>
</feature>
<feature type="site" description="Reactive bond for chymotrypsin, trypsin and elastase" evidence="1">
    <location>
        <begin position="97"/>
        <end position="98"/>
    </location>
</feature>
<feature type="glycosylation site" description="N-linked (GlcNAc...) asparagine" evidence="3">
    <location>
        <position position="77"/>
    </location>
</feature>
<feature type="disulfide bond" evidence="4">
    <location>
        <begin position="35"/>
        <end position="64"/>
    </location>
</feature>
<feature type="disulfide bond" evidence="4">
    <location>
        <begin position="43"/>
        <end position="68"/>
    </location>
</feature>
<feature type="disulfide bond" evidence="4">
    <location>
        <begin position="51"/>
        <end position="63"/>
    </location>
</feature>
<feature type="disulfide bond" evidence="4">
    <location>
        <begin position="57"/>
        <end position="72"/>
    </location>
</feature>
<feature type="disulfide bond" evidence="4">
    <location>
        <begin position="89"/>
        <end position="118"/>
    </location>
</feature>
<feature type="disulfide bond" evidence="4">
    <location>
        <begin position="96"/>
        <end position="122"/>
    </location>
</feature>
<feature type="disulfide bond" evidence="4">
    <location>
        <begin position="105"/>
        <end position="117"/>
    </location>
</feature>
<feature type="disulfide bond" evidence="4">
    <location>
        <begin position="111"/>
        <end position="126"/>
    </location>
</feature>
<gene>
    <name type="primary">SLPI</name>
</gene>
<proteinExistence type="evidence at protein level"/>
<evidence type="ECO:0000250" key="1">
    <source>
        <dbReference type="UniProtKB" id="P03973"/>
    </source>
</evidence>
<evidence type="ECO:0000250" key="2">
    <source>
        <dbReference type="UniProtKB" id="P97430"/>
    </source>
</evidence>
<evidence type="ECO:0000255" key="3"/>
<evidence type="ECO:0000255" key="4">
    <source>
        <dbReference type="PROSITE-ProRule" id="PRU00722"/>
    </source>
</evidence>
<evidence type="ECO:0000269" key="5">
    <source>
    </source>
</evidence>
<protein>
    <recommendedName>
        <fullName>Antileukoproteinase</fullName>
        <shortName>ALP</shortName>
    </recommendedName>
    <alternativeName>
        <fullName>Secretory leukocyte protease inhibitor</fullName>
    </alternativeName>
</protein>
<organism>
    <name type="scientific">Ovis aries</name>
    <name type="common">Sheep</name>
    <dbReference type="NCBI Taxonomy" id="9940"/>
    <lineage>
        <taxon>Eukaryota</taxon>
        <taxon>Metazoa</taxon>
        <taxon>Chordata</taxon>
        <taxon>Craniata</taxon>
        <taxon>Vertebrata</taxon>
        <taxon>Euteleostomi</taxon>
        <taxon>Mammalia</taxon>
        <taxon>Eutheria</taxon>
        <taxon>Laurasiatheria</taxon>
        <taxon>Artiodactyla</taxon>
        <taxon>Ruminantia</taxon>
        <taxon>Pecora</taxon>
        <taxon>Bovidae</taxon>
        <taxon>Caprinae</taxon>
        <taxon>Ovis</taxon>
    </lineage>
</organism>
<sequence length="132" mass="14197">MKFSGLFPFLLLALGTLALWAVEGAENEALKAGACPPRKSAQCFGNEKPRCSSDWQCPHKKKCCLDTCGTECLDPVNITNPVKKKPGTCPVIHGQCLMLKPLNHCETDDQCIGALKCCKAMCGKVCLSPVKA</sequence>
<accession>Q6V9X0</accession>
<keyword id="KW-0044">Antibiotic</keyword>
<keyword id="KW-0929">Antimicrobial</keyword>
<keyword id="KW-1015">Disulfide bond</keyword>
<keyword id="KW-0325">Glycoprotein</keyword>
<keyword id="KW-0391">Immunity</keyword>
<keyword id="KW-0399">Innate immunity</keyword>
<keyword id="KW-0646">Protease inhibitor</keyword>
<keyword id="KW-1185">Reference proteome</keyword>
<keyword id="KW-0677">Repeat</keyword>
<keyword id="KW-0964">Secreted</keyword>
<keyword id="KW-0722">Serine protease inhibitor</keyword>
<keyword id="KW-0732">Signal</keyword>
<comment type="function">
    <text evidence="1 2">Acid-stable proteinase inhibitor with strong affinities for trypsin, chymotrypsin, elastase, and cathepsin G. Modulates the inflammatory and immune responses after bacterial infection, and after infection by the intracellular parasite L.major. Down-regulates responses to bacterial lipopolysaccharide (LPS). Plays a role in regulating the activation of NF-kappa-B and inflammatory responses. Has antimicrobial activity against mycobacteria, but not against salmonella. Contributes to normal resistance against infection by M.tuberculosis. Required for normal resistance to infection by L.major. Required for normal wound healing, probably by preventing tissue damage by limiting protease activity (By similarity). Together with ELANE, required for normal differentiation and proliferation of bone marrow myeloid cells (By similarity).</text>
</comment>
<comment type="subunit">
    <text evidence="1">Interacts with GRN; interaction protects progranulin from proteolysis.</text>
</comment>
<comment type="subcellular location">
    <subcellularLocation>
        <location evidence="5">Secreted</location>
    </subcellularLocation>
</comment>
<comment type="tissue specificity">
    <text evidence="5">Detected in bronchoalveolar fluid (at protein level). Detected in large and small intestine, trachea, skin, lung and tongue.</text>
</comment>
<comment type="induction">
    <text evidence="5">Up-regulated in response to bacterial lipopolysaccharide (LPS) in bronchoalveolar fluid (at protein level).</text>
</comment>
<dbReference type="EMBL" id="AY346135">
    <property type="protein sequence ID" value="AAQ23185.1"/>
    <property type="molecule type" value="Genomic_DNA"/>
</dbReference>
<dbReference type="RefSeq" id="NP_001030302.1">
    <property type="nucleotide sequence ID" value="NM_001035225.1"/>
</dbReference>
<dbReference type="SMR" id="Q6V9X0"/>
<dbReference type="STRING" id="9940.ENSOARP00000005324"/>
<dbReference type="MEROPS" id="I17.001"/>
<dbReference type="MEROPS" id="I17.950"/>
<dbReference type="GlyCosmos" id="Q6V9X0">
    <property type="glycosylation" value="1 site, No reported glycans"/>
</dbReference>
<dbReference type="PaxDb" id="9940-ENSOARP00000005324"/>
<dbReference type="GeneID" id="641306"/>
<dbReference type="KEGG" id="oas:641306"/>
<dbReference type="CTD" id="6590"/>
<dbReference type="eggNOG" id="ENOG502SWIR">
    <property type="taxonomic scope" value="Eukaryota"/>
</dbReference>
<dbReference type="OrthoDB" id="4473401at2759"/>
<dbReference type="Proteomes" id="UP000002356">
    <property type="component" value="Unplaced"/>
</dbReference>
<dbReference type="GO" id="GO:0005615">
    <property type="term" value="C:extracellular space"/>
    <property type="evidence" value="ECO:0000250"/>
    <property type="project" value="UniProtKB"/>
</dbReference>
<dbReference type="GO" id="GO:0004867">
    <property type="term" value="F:serine-type endopeptidase inhibitor activity"/>
    <property type="evidence" value="ECO:0000250"/>
    <property type="project" value="UniProtKB"/>
</dbReference>
<dbReference type="GO" id="GO:0019731">
    <property type="term" value="P:antibacterial humoral response"/>
    <property type="evidence" value="ECO:0000250"/>
    <property type="project" value="UniProtKB"/>
</dbReference>
<dbReference type="GO" id="GO:0006955">
    <property type="term" value="P:immune response"/>
    <property type="evidence" value="ECO:0000250"/>
    <property type="project" value="UniProtKB"/>
</dbReference>
<dbReference type="GO" id="GO:0045087">
    <property type="term" value="P:innate immune response"/>
    <property type="evidence" value="ECO:0000250"/>
    <property type="project" value="UniProtKB"/>
</dbReference>
<dbReference type="GO" id="GO:0032496">
    <property type="term" value="P:response to lipopolysaccharide"/>
    <property type="evidence" value="ECO:0000250"/>
    <property type="project" value="UniProtKB"/>
</dbReference>
<dbReference type="FunFam" id="4.10.75.10:FF:000001">
    <property type="entry name" value="Anosmin 1"/>
    <property type="match status" value="2"/>
</dbReference>
<dbReference type="Gene3D" id="4.10.75.10">
    <property type="entry name" value="Elafin-like"/>
    <property type="match status" value="2"/>
</dbReference>
<dbReference type="InterPro" id="IPR036645">
    <property type="entry name" value="Elafin-like_sf"/>
</dbReference>
<dbReference type="InterPro" id="IPR008197">
    <property type="entry name" value="WAP_dom"/>
</dbReference>
<dbReference type="InterPro" id="IPR050514">
    <property type="entry name" value="WAP_four-disulfide_core"/>
</dbReference>
<dbReference type="PANTHER" id="PTHR19441:SF44">
    <property type="entry name" value="ANTILEUKOPROTEINASE"/>
    <property type="match status" value="1"/>
</dbReference>
<dbReference type="PANTHER" id="PTHR19441">
    <property type="entry name" value="WHEY ACDIC PROTEIN WAP"/>
    <property type="match status" value="1"/>
</dbReference>
<dbReference type="Pfam" id="PF00095">
    <property type="entry name" value="WAP"/>
    <property type="match status" value="2"/>
</dbReference>
<dbReference type="PRINTS" id="PR00003">
    <property type="entry name" value="4DISULPHCORE"/>
</dbReference>
<dbReference type="SMART" id="SM00217">
    <property type="entry name" value="WAP"/>
    <property type="match status" value="2"/>
</dbReference>
<dbReference type="SUPFAM" id="SSF57256">
    <property type="entry name" value="Elafin-like"/>
    <property type="match status" value="2"/>
</dbReference>
<dbReference type="PROSITE" id="PS51390">
    <property type="entry name" value="WAP"/>
    <property type="match status" value="2"/>
</dbReference>